<comment type="function">
    <text evidence="1">Transaldolase is important for the balance of metabolites in the pentose-phosphate pathway.</text>
</comment>
<comment type="catalytic activity">
    <reaction evidence="1">
        <text>D-sedoheptulose 7-phosphate + D-glyceraldehyde 3-phosphate = D-erythrose 4-phosphate + beta-D-fructose 6-phosphate</text>
        <dbReference type="Rhea" id="RHEA:17053"/>
        <dbReference type="ChEBI" id="CHEBI:16897"/>
        <dbReference type="ChEBI" id="CHEBI:57483"/>
        <dbReference type="ChEBI" id="CHEBI:57634"/>
        <dbReference type="ChEBI" id="CHEBI:59776"/>
        <dbReference type="EC" id="2.2.1.2"/>
    </reaction>
</comment>
<comment type="pathway">
    <text evidence="1">Carbohydrate degradation; pentose phosphate pathway; D-glyceraldehyde 3-phosphate and beta-D-fructose 6-phosphate from D-ribose 5-phosphate and D-xylulose 5-phosphate (non-oxidative stage): step 2/3.</text>
</comment>
<comment type="subcellular location">
    <subcellularLocation>
        <location evidence="1">Cytoplasm</location>
    </subcellularLocation>
</comment>
<comment type="similarity">
    <text evidence="1">Belongs to the transaldolase family. Type 3B subfamily.</text>
</comment>
<sequence>MKLFIDTANIEEIREAYALGIICGVTTNPSLIAREGRNFAQVVREIAAIVDGPISAEAVSPDAAGMIAEAEELSSIHPNIVVKIPMTAEGLKAVKILAQKGIRTNVTLIFSANQALLAARAGASYVSPFVGRLDDVSQDGAALIYDIMEIFERHCIRTEVIAASIRHPVHVTMAAKAGAHIATVPYKVLMQMIGHPLTEAGIKKFLEDWEKVKDK</sequence>
<protein>
    <recommendedName>
        <fullName evidence="1">Probable transaldolase</fullName>
        <ecNumber evidence="1">2.2.1.2</ecNumber>
    </recommendedName>
</protein>
<organism>
    <name type="scientific">Pelotomaculum thermopropionicum (strain DSM 13744 / JCM 10971 / SI)</name>
    <dbReference type="NCBI Taxonomy" id="370438"/>
    <lineage>
        <taxon>Bacteria</taxon>
        <taxon>Bacillati</taxon>
        <taxon>Bacillota</taxon>
        <taxon>Clostridia</taxon>
        <taxon>Eubacteriales</taxon>
        <taxon>Desulfotomaculaceae</taxon>
        <taxon>Pelotomaculum</taxon>
    </lineage>
</organism>
<evidence type="ECO:0000255" key="1">
    <source>
        <dbReference type="HAMAP-Rule" id="MF_00494"/>
    </source>
</evidence>
<accession>A5CYD0</accession>
<dbReference type="EC" id="2.2.1.2" evidence="1"/>
<dbReference type="EMBL" id="AP009389">
    <property type="protein sequence ID" value="BAF61018.1"/>
    <property type="molecule type" value="Genomic_DNA"/>
</dbReference>
<dbReference type="SMR" id="A5CYD0"/>
<dbReference type="STRING" id="370438.PTH_2837"/>
<dbReference type="KEGG" id="pth:PTH_2837"/>
<dbReference type="eggNOG" id="COG0176">
    <property type="taxonomic scope" value="Bacteria"/>
</dbReference>
<dbReference type="HOGENOM" id="CLU_079764_0_0_9"/>
<dbReference type="UniPathway" id="UPA00115">
    <property type="reaction ID" value="UER00414"/>
</dbReference>
<dbReference type="Proteomes" id="UP000006556">
    <property type="component" value="Chromosome"/>
</dbReference>
<dbReference type="GO" id="GO:0005737">
    <property type="term" value="C:cytoplasm"/>
    <property type="evidence" value="ECO:0007669"/>
    <property type="project" value="UniProtKB-SubCell"/>
</dbReference>
<dbReference type="GO" id="GO:0016832">
    <property type="term" value="F:aldehyde-lyase activity"/>
    <property type="evidence" value="ECO:0007669"/>
    <property type="project" value="InterPro"/>
</dbReference>
<dbReference type="GO" id="GO:0004801">
    <property type="term" value="F:transaldolase activity"/>
    <property type="evidence" value="ECO:0007669"/>
    <property type="project" value="UniProtKB-UniRule"/>
</dbReference>
<dbReference type="GO" id="GO:0005975">
    <property type="term" value="P:carbohydrate metabolic process"/>
    <property type="evidence" value="ECO:0007669"/>
    <property type="project" value="InterPro"/>
</dbReference>
<dbReference type="GO" id="GO:0006098">
    <property type="term" value="P:pentose-phosphate shunt"/>
    <property type="evidence" value="ECO:0007669"/>
    <property type="project" value="UniProtKB-UniRule"/>
</dbReference>
<dbReference type="CDD" id="cd00956">
    <property type="entry name" value="Transaldolase_FSA"/>
    <property type="match status" value="1"/>
</dbReference>
<dbReference type="FunFam" id="3.20.20.70:FF:000018">
    <property type="entry name" value="Probable transaldolase"/>
    <property type="match status" value="1"/>
</dbReference>
<dbReference type="Gene3D" id="3.20.20.70">
    <property type="entry name" value="Aldolase class I"/>
    <property type="match status" value="1"/>
</dbReference>
<dbReference type="HAMAP" id="MF_00494">
    <property type="entry name" value="Transaldolase_3b"/>
    <property type="match status" value="1"/>
</dbReference>
<dbReference type="InterPro" id="IPR013785">
    <property type="entry name" value="Aldolase_TIM"/>
</dbReference>
<dbReference type="InterPro" id="IPR001585">
    <property type="entry name" value="TAL/FSA"/>
</dbReference>
<dbReference type="InterPro" id="IPR022999">
    <property type="entry name" value="Transaldolase_3B"/>
</dbReference>
<dbReference type="InterPro" id="IPR004731">
    <property type="entry name" value="Transaldolase_3B/F6P_aldolase"/>
</dbReference>
<dbReference type="InterPro" id="IPR018225">
    <property type="entry name" value="Transaldolase_AS"/>
</dbReference>
<dbReference type="InterPro" id="IPR033919">
    <property type="entry name" value="TSA/FSA_arc/bac"/>
</dbReference>
<dbReference type="NCBIfam" id="TIGR00875">
    <property type="entry name" value="fsa_talC_mipB"/>
    <property type="match status" value="1"/>
</dbReference>
<dbReference type="PANTHER" id="PTHR10683">
    <property type="entry name" value="TRANSALDOLASE"/>
    <property type="match status" value="1"/>
</dbReference>
<dbReference type="PANTHER" id="PTHR10683:SF36">
    <property type="entry name" value="TRANSALDOLASE"/>
    <property type="match status" value="1"/>
</dbReference>
<dbReference type="Pfam" id="PF00923">
    <property type="entry name" value="TAL_FSA"/>
    <property type="match status" value="1"/>
</dbReference>
<dbReference type="SUPFAM" id="SSF51569">
    <property type="entry name" value="Aldolase"/>
    <property type="match status" value="1"/>
</dbReference>
<dbReference type="PROSITE" id="PS01054">
    <property type="entry name" value="TRANSALDOLASE_1"/>
    <property type="match status" value="1"/>
</dbReference>
<dbReference type="PROSITE" id="PS00958">
    <property type="entry name" value="TRANSALDOLASE_2"/>
    <property type="match status" value="1"/>
</dbReference>
<keyword id="KW-0963">Cytoplasm</keyword>
<keyword id="KW-0570">Pentose shunt</keyword>
<keyword id="KW-1185">Reference proteome</keyword>
<keyword id="KW-0704">Schiff base</keyword>
<keyword id="KW-0808">Transferase</keyword>
<feature type="chain" id="PRO_1000126341" description="Probable transaldolase">
    <location>
        <begin position="1"/>
        <end position="215"/>
    </location>
</feature>
<feature type="active site" description="Schiff-base intermediate with substrate" evidence="1">
    <location>
        <position position="83"/>
    </location>
</feature>
<gene>
    <name evidence="1" type="primary">tal</name>
    <name type="ordered locus">PTH_2837</name>
</gene>
<reference key="1">
    <citation type="journal article" date="2008" name="Genome Res.">
        <title>The genome of Pelotomaculum thermopropionicum reveals niche-associated evolution in anaerobic microbiota.</title>
        <authorList>
            <person name="Kosaka T."/>
            <person name="Kato S."/>
            <person name="Shimoyama T."/>
            <person name="Ishii S."/>
            <person name="Abe T."/>
            <person name="Watanabe K."/>
        </authorList>
    </citation>
    <scope>NUCLEOTIDE SEQUENCE [LARGE SCALE GENOMIC DNA]</scope>
    <source>
        <strain>DSM 13744 / JCM 10971 / SI</strain>
    </source>
</reference>
<proteinExistence type="inferred from homology"/>
<name>TAL_PELTS</name>